<comment type="function">
    <text evidence="2">Thiol protease involved in osteoclastic bone resorption and may participate partially in the disorder of bone remodeling. Displays potent endoprotease activity against fibrinogen at acid pH. May play an important role in extracellular matrix degradation. Involved in the release of thyroid hormone thyroxine (T4) by limited proteolysis of TG/thyroglobulin in the thyroid follicle lumen.</text>
</comment>
<comment type="catalytic activity">
    <reaction>
        <text>Broad proteolytic activity. With small-molecule substrates and inhibitors, the major determinant of specificity is P2, which is preferably Leu, Met &gt; Phe, and not Arg.</text>
        <dbReference type="EC" id="3.4.22.38"/>
    </reaction>
</comment>
<comment type="subcellular location">
    <subcellularLocation>
        <location evidence="2">Lysosome</location>
    </subcellularLocation>
    <subcellularLocation>
        <location evidence="2">Secreted</location>
    </subcellularLocation>
    <subcellularLocation>
        <location evidence="2">Apical cell membrane</location>
        <topology evidence="2">Peripheral membrane protein</topology>
        <orientation evidence="2">Extracellular side</orientation>
    </subcellularLocation>
    <text evidence="2">Localizes to the lumen of thyroid follicles and to the apical membrane of thyroid epithelial cells.</text>
</comment>
<comment type="similarity">
    <text evidence="4 5 6">Belongs to the peptidase C1 family.</text>
</comment>
<dbReference type="EC" id="3.4.22.38"/>
<dbReference type="EMBL" id="AF010306">
    <property type="protein sequence ID" value="AAB65743.1"/>
    <property type="molecule type" value="mRNA"/>
</dbReference>
<dbReference type="EMBL" id="BC078793">
    <property type="protein sequence ID" value="AAH78793.1"/>
    <property type="molecule type" value="mRNA"/>
</dbReference>
<dbReference type="RefSeq" id="NP_113748.1">
    <property type="nucleotide sequence ID" value="NM_031560.2"/>
</dbReference>
<dbReference type="SMR" id="O35186"/>
<dbReference type="FunCoup" id="O35186">
    <property type="interactions" value="229"/>
</dbReference>
<dbReference type="STRING" id="10116.ENSRNOP00000028730"/>
<dbReference type="BindingDB" id="O35186"/>
<dbReference type="ChEMBL" id="CHEMBL3034"/>
<dbReference type="MEROPS" id="C01.036"/>
<dbReference type="MEROPS" id="I29.007"/>
<dbReference type="GlyCosmos" id="O35186">
    <property type="glycosylation" value="2 sites, No reported glycans"/>
</dbReference>
<dbReference type="GlyGen" id="O35186">
    <property type="glycosylation" value="2 sites"/>
</dbReference>
<dbReference type="iPTMnet" id="O35186"/>
<dbReference type="PhosphoSitePlus" id="O35186"/>
<dbReference type="PaxDb" id="10116-ENSRNOP00000028730"/>
<dbReference type="Ensembl" id="ENSRNOT00000028730.7">
    <property type="protein sequence ID" value="ENSRNOP00000028730.3"/>
    <property type="gene ID" value="ENSRNOG00000021155.7"/>
</dbReference>
<dbReference type="GeneID" id="29175"/>
<dbReference type="KEGG" id="rno:29175"/>
<dbReference type="UCSC" id="RGD:61810">
    <property type="organism name" value="rat"/>
</dbReference>
<dbReference type="AGR" id="RGD:61810"/>
<dbReference type="CTD" id="1513"/>
<dbReference type="RGD" id="61810">
    <property type="gene designation" value="Ctsk"/>
</dbReference>
<dbReference type="eggNOG" id="KOG1543">
    <property type="taxonomic scope" value="Eukaryota"/>
</dbReference>
<dbReference type="GeneTree" id="ENSGT00940000157759"/>
<dbReference type="HOGENOM" id="CLU_012184_1_2_1"/>
<dbReference type="InParanoid" id="O35186"/>
<dbReference type="OMA" id="EGETCCC"/>
<dbReference type="OrthoDB" id="8007at9989"/>
<dbReference type="PhylomeDB" id="O35186"/>
<dbReference type="TreeFam" id="TF313739"/>
<dbReference type="BRENDA" id="3.4.22.38">
    <property type="organism ID" value="5301"/>
</dbReference>
<dbReference type="Reactome" id="R-RNO-1442490">
    <property type="pathway name" value="Collagen degradation"/>
</dbReference>
<dbReference type="Reactome" id="R-RNO-1474228">
    <property type="pathway name" value="Degradation of the extracellular matrix"/>
</dbReference>
<dbReference type="Reactome" id="R-RNO-1592389">
    <property type="pathway name" value="Activation of Matrix Metalloproteinases"/>
</dbReference>
<dbReference type="Reactome" id="R-RNO-1679131">
    <property type="pathway name" value="Trafficking and processing of endosomal TLR"/>
</dbReference>
<dbReference type="Reactome" id="R-RNO-2132295">
    <property type="pathway name" value="MHC class II antigen presentation"/>
</dbReference>
<dbReference type="Reactome" id="R-RNO-8939242">
    <property type="pathway name" value="RUNX1 regulates transcription of genes involved in differentiation of keratinocytes"/>
</dbReference>
<dbReference type="PRO" id="PR:O35186"/>
<dbReference type="Proteomes" id="UP000002494">
    <property type="component" value="Chromosome 2"/>
</dbReference>
<dbReference type="Bgee" id="ENSRNOG00000021155">
    <property type="expression patterns" value="Expressed in ovary and 20 other cell types or tissues"/>
</dbReference>
<dbReference type="GO" id="GO:0016324">
    <property type="term" value="C:apical plasma membrane"/>
    <property type="evidence" value="ECO:0007669"/>
    <property type="project" value="UniProtKB-SubCell"/>
</dbReference>
<dbReference type="GO" id="GO:0009897">
    <property type="term" value="C:external side of plasma membrane"/>
    <property type="evidence" value="ECO:0000266"/>
    <property type="project" value="RGD"/>
</dbReference>
<dbReference type="GO" id="GO:0005615">
    <property type="term" value="C:extracellular space"/>
    <property type="evidence" value="ECO:0000314"/>
    <property type="project" value="RGD"/>
</dbReference>
<dbReference type="GO" id="GO:0005764">
    <property type="term" value="C:lysosome"/>
    <property type="evidence" value="ECO:0000266"/>
    <property type="project" value="RGD"/>
</dbReference>
<dbReference type="GO" id="GO:0005518">
    <property type="term" value="F:collagen binding"/>
    <property type="evidence" value="ECO:0000266"/>
    <property type="project" value="RGD"/>
</dbReference>
<dbReference type="GO" id="GO:0004197">
    <property type="term" value="F:cysteine-type endopeptidase activity"/>
    <property type="evidence" value="ECO:0000266"/>
    <property type="project" value="RGD"/>
</dbReference>
<dbReference type="GO" id="GO:0008234">
    <property type="term" value="F:cysteine-type peptidase activity"/>
    <property type="evidence" value="ECO:0000266"/>
    <property type="project" value="RGD"/>
</dbReference>
<dbReference type="GO" id="GO:0001968">
    <property type="term" value="F:fibronectin binding"/>
    <property type="evidence" value="ECO:0000266"/>
    <property type="project" value="RGD"/>
</dbReference>
<dbReference type="GO" id="GO:0043394">
    <property type="term" value="F:proteoglycan binding"/>
    <property type="evidence" value="ECO:0000266"/>
    <property type="project" value="RGD"/>
</dbReference>
<dbReference type="GO" id="GO:0045453">
    <property type="term" value="P:bone resorption"/>
    <property type="evidence" value="ECO:0000315"/>
    <property type="project" value="RGD"/>
</dbReference>
<dbReference type="GO" id="GO:0071560">
    <property type="term" value="P:cellular response to transforming growth factor beta stimulus"/>
    <property type="evidence" value="ECO:0000270"/>
    <property type="project" value="RGD"/>
</dbReference>
<dbReference type="GO" id="GO:0071356">
    <property type="term" value="P:cellular response to tumor necrosis factor"/>
    <property type="evidence" value="ECO:0000270"/>
    <property type="project" value="RGD"/>
</dbReference>
<dbReference type="GO" id="GO:0034224">
    <property type="term" value="P:cellular response to zinc ion starvation"/>
    <property type="evidence" value="ECO:0000270"/>
    <property type="project" value="RGD"/>
</dbReference>
<dbReference type="GO" id="GO:0030574">
    <property type="term" value="P:collagen catabolic process"/>
    <property type="evidence" value="ECO:0000266"/>
    <property type="project" value="RGD"/>
</dbReference>
<dbReference type="GO" id="GO:0001957">
    <property type="term" value="P:intramembranous ossification"/>
    <property type="evidence" value="ECO:0000270"/>
    <property type="project" value="RGD"/>
</dbReference>
<dbReference type="GO" id="GO:1903131">
    <property type="term" value="P:mononuclear cell differentiation"/>
    <property type="evidence" value="ECO:0000270"/>
    <property type="project" value="RGD"/>
</dbReference>
<dbReference type="GO" id="GO:0061037">
    <property type="term" value="P:negative regulation of cartilage development"/>
    <property type="evidence" value="ECO:0000266"/>
    <property type="project" value="RGD"/>
</dbReference>
<dbReference type="GO" id="GO:0006508">
    <property type="term" value="P:proteolysis"/>
    <property type="evidence" value="ECO:0000314"/>
    <property type="project" value="RGD"/>
</dbReference>
<dbReference type="GO" id="GO:0051603">
    <property type="term" value="P:proteolysis involved in protein catabolic process"/>
    <property type="evidence" value="ECO:0000266"/>
    <property type="project" value="RGD"/>
</dbReference>
<dbReference type="GO" id="GO:0045471">
    <property type="term" value="P:response to ethanol"/>
    <property type="evidence" value="ECO:0000270"/>
    <property type="project" value="RGD"/>
</dbReference>
<dbReference type="GO" id="GO:0032868">
    <property type="term" value="P:response to insulin"/>
    <property type="evidence" value="ECO:0000270"/>
    <property type="project" value="RGD"/>
</dbReference>
<dbReference type="GO" id="GO:0006590">
    <property type="term" value="P:thyroid hormone generation"/>
    <property type="evidence" value="ECO:0000250"/>
    <property type="project" value="UniProtKB"/>
</dbReference>
<dbReference type="CDD" id="cd02248">
    <property type="entry name" value="Peptidase_C1A"/>
    <property type="match status" value="1"/>
</dbReference>
<dbReference type="FunFam" id="1.10.287.2250:FF:000003">
    <property type="entry name" value="Cathepsin L"/>
    <property type="match status" value="1"/>
</dbReference>
<dbReference type="FunFam" id="3.90.70.10:FF:000006">
    <property type="entry name" value="Cathepsin S"/>
    <property type="match status" value="1"/>
</dbReference>
<dbReference type="Gene3D" id="3.90.70.10">
    <property type="entry name" value="Cysteine proteinases"/>
    <property type="match status" value="1"/>
</dbReference>
<dbReference type="InterPro" id="IPR038765">
    <property type="entry name" value="Papain-like_cys_pep_sf"/>
</dbReference>
<dbReference type="InterPro" id="IPR025661">
    <property type="entry name" value="Pept_asp_AS"/>
</dbReference>
<dbReference type="InterPro" id="IPR000169">
    <property type="entry name" value="Pept_cys_AS"/>
</dbReference>
<dbReference type="InterPro" id="IPR025660">
    <property type="entry name" value="Pept_his_AS"/>
</dbReference>
<dbReference type="InterPro" id="IPR013128">
    <property type="entry name" value="Peptidase_C1A"/>
</dbReference>
<dbReference type="InterPro" id="IPR000668">
    <property type="entry name" value="Peptidase_C1A_C"/>
</dbReference>
<dbReference type="InterPro" id="IPR039417">
    <property type="entry name" value="Peptidase_C1A_papain-like"/>
</dbReference>
<dbReference type="InterPro" id="IPR013201">
    <property type="entry name" value="Prot_inhib_I29"/>
</dbReference>
<dbReference type="PANTHER" id="PTHR12411">
    <property type="entry name" value="CYSTEINE PROTEASE FAMILY C1-RELATED"/>
    <property type="match status" value="1"/>
</dbReference>
<dbReference type="Pfam" id="PF08246">
    <property type="entry name" value="Inhibitor_I29"/>
    <property type="match status" value="1"/>
</dbReference>
<dbReference type="Pfam" id="PF00112">
    <property type="entry name" value="Peptidase_C1"/>
    <property type="match status" value="1"/>
</dbReference>
<dbReference type="PRINTS" id="PR00705">
    <property type="entry name" value="PAPAIN"/>
</dbReference>
<dbReference type="SMART" id="SM00848">
    <property type="entry name" value="Inhibitor_I29"/>
    <property type="match status" value="1"/>
</dbReference>
<dbReference type="SMART" id="SM00645">
    <property type="entry name" value="Pept_C1"/>
    <property type="match status" value="1"/>
</dbReference>
<dbReference type="SUPFAM" id="SSF54001">
    <property type="entry name" value="Cysteine proteinases"/>
    <property type="match status" value="1"/>
</dbReference>
<dbReference type="PROSITE" id="PS00640">
    <property type="entry name" value="THIOL_PROTEASE_ASN"/>
    <property type="match status" value="1"/>
</dbReference>
<dbReference type="PROSITE" id="PS00139">
    <property type="entry name" value="THIOL_PROTEASE_CYS"/>
    <property type="match status" value="1"/>
</dbReference>
<dbReference type="PROSITE" id="PS00639">
    <property type="entry name" value="THIOL_PROTEASE_HIS"/>
    <property type="match status" value="1"/>
</dbReference>
<accession>O35186</accession>
<gene>
    <name type="primary">Ctsk</name>
</gene>
<evidence type="ECO:0000250" key="1"/>
<evidence type="ECO:0000250" key="2">
    <source>
        <dbReference type="UniProtKB" id="P43235"/>
    </source>
</evidence>
<evidence type="ECO:0000255" key="3"/>
<evidence type="ECO:0000255" key="4">
    <source>
        <dbReference type="PROSITE-ProRule" id="PRU10088"/>
    </source>
</evidence>
<evidence type="ECO:0000255" key="5">
    <source>
        <dbReference type="PROSITE-ProRule" id="PRU10089"/>
    </source>
</evidence>
<evidence type="ECO:0000255" key="6">
    <source>
        <dbReference type="PROSITE-ProRule" id="PRU10090"/>
    </source>
</evidence>
<protein>
    <recommendedName>
        <fullName>Cathepsin K</fullName>
        <ecNumber>3.4.22.38</ecNumber>
    </recommendedName>
</protein>
<feature type="signal peptide" evidence="3">
    <location>
        <begin position="1"/>
        <end position="15"/>
    </location>
</feature>
<feature type="propeptide" id="PRO_0000026307" description="Activation peptide">
    <location>
        <begin position="16"/>
        <end position="114"/>
    </location>
</feature>
<feature type="chain" id="PRO_0000026308" description="Cathepsin K">
    <location>
        <begin position="115"/>
        <end position="329"/>
    </location>
</feature>
<feature type="active site" evidence="1">
    <location>
        <position position="139"/>
    </location>
</feature>
<feature type="active site" evidence="1">
    <location>
        <position position="276"/>
    </location>
</feature>
<feature type="active site" evidence="1">
    <location>
        <position position="296"/>
    </location>
</feature>
<feature type="glycosylation site" description="N-linked (GlcNAc...) asparagine" evidence="3">
    <location>
        <position position="103"/>
    </location>
</feature>
<feature type="glycosylation site" description="N-linked (GlcNAc...) asparagine" evidence="3">
    <location>
        <position position="213"/>
    </location>
</feature>
<feature type="disulfide bond" evidence="1">
    <location>
        <begin position="136"/>
        <end position="177"/>
    </location>
</feature>
<feature type="disulfide bond" evidence="1">
    <location>
        <begin position="170"/>
        <end position="210"/>
    </location>
</feature>
<feature type="disulfide bond" evidence="1">
    <location>
        <begin position="269"/>
        <end position="318"/>
    </location>
</feature>
<name>CATK_RAT</name>
<sequence length="329" mass="36791">MWVFKFLLLPVVSFALSPEETLDTQWELWKKTHGKQYNSKVDEISRRLIWEKNLKKISVHNLEASLGAHTYELAMNHLGDMTSEEVVQKMTGLRVPPSRSFSNDTLYTPEWEGRVPDSIDYRKKGYVTPVKNQGQCGSCWAFSSAGALEGQLKKKTGKLLALSPQNLVDCVSENYGCGGGYMTTAFQYVQQNGGIDSEDAYPYVGQDESCMYNATAKAAKCRGYREIPVGNEKALKRAVARVGPVSVSIDASLTSFQFYSRGVYYDENCDRDNVNHAVLVVGYGTQKGNKYWIIKNSWGESWGNKGYVLLARNKNNACGITNLASFPKM</sequence>
<reference key="1">
    <citation type="submission" date="1997-06" db="EMBL/GenBank/DDBJ databases">
        <authorList>
            <person name="Payne J.A."/>
            <person name="Miller L.R."/>
        </authorList>
    </citation>
    <scope>NUCLEOTIDE SEQUENCE [MRNA]</scope>
    <source>
        <strain>Wistar</strain>
        <tissue>Bone</tissue>
    </source>
</reference>
<reference key="2">
    <citation type="journal article" date="2004" name="Genome Res.">
        <title>The status, quality, and expansion of the NIH full-length cDNA project: the Mammalian Gene Collection (MGC).</title>
        <authorList>
            <consortium name="The MGC Project Team"/>
        </authorList>
    </citation>
    <scope>NUCLEOTIDE SEQUENCE [LARGE SCALE MRNA]</scope>
    <source>
        <tissue>Testis</tissue>
    </source>
</reference>
<keyword id="KW-1003">Cell membrane</keyword>
<keyword id="KW-1015">Disulfide bond</keyword>
<keyword id="KW-0325">Glycoprotein</keyword>
<keyword id="KW-0378">Hydrolase</keyword>
<keyword id="KW-0458">Lysosome</keyword>
<keyword id="KW-0472">Membrane</keyword>
<keyword id="KW-0645">Protease</keyword>
<keyword id="KW-1185">Reference proteome</keyword>
<keyword id="KW-0964">Secreted</keyword>
<keyword id="KW-0732">Signal</keyword>
<keyword id="KW-0788">Thiol protease</keyword>
<keyword id="KW-0865">Zymogen</keyword>
<proteinExistence type="evidence at transcript level"/>
<organism>
    <name type="scientific">Rattus norvegicus</name>
    <name type="common">Rat</name>
    <dbReference type="NCBI Taxonomy" id="10116"/>
    <lineage>
        <taxon>Eukaryota</taxon>
        <taxon>Metazoa</taxon>
        <taxon>Chordata</taxon>
        <taxon>Craniata</taxon>
        <taxon>Vertebrata</taxon>
        <taxon>Euteleostomi</taxon>
        <taxon>Mammalia</taxon>
        <taxon>Eutheria</taxon>
        <taxon>Euarchontoglires</taxon>
        <taxon>Glires</taxon>
        <taxon>Rodentia</taxon>
        <taxon>Myomorpha</taxon>
        <taxon>Muroidea</taxon>
        <taxon>Muridae</taxon>
        <taxon>Murinae</taxon>
        <taxon>Rattus</taxon>
    </lineage>
</organism>